<protein>
    <recommendedName>
        <fullName evidence="1">2-succinyl-6-hydroxy-2,4-cyclohexadiene-1-carboxylate synthase</fullName>
        <shortName evidence="1">SHCHC synthase</shortName>
        <ecNumber evidence="1">4.2.99.20</ecNumber>
    </recommendedName>
</protein>
<sequence>MILHAQAKHGKPGLPWLVFLHGFSGDCHEWQEVGEAFADYSRLYVDLPGHGGSATISVDGFDDVTGLLCKTLVSYNILNFWLVGYSLGGRVAMMAACQEPAGLCGVVVEGGHPGLQNAEQRAERQRSDRQWAQRFRTEPLTAVFADWYQQPVFASLNDDQRRELVALRSNNNGATLAAMLEATSLAVQPDLRANLSARTFAFYYLCGERDSKFRALAAELAADCHVIPRAGHNAHRENPAGVIASLAQILRF</sequence>
<dbReference type="EC" id="4.2.99.20" evidence="1"/>
<dbReference type="EMBL" id="CU928161">
    <property type="protein sequence ID" value="CAR03693.1"/>
    <property type="molecule type" value="Genomic_DNA"/>
</dbReference>
<dbReference type="RefSeq" id="WP_000600529.1">
    <property type="nucleotide sequence ID" value="NC_011742.1"/>
</dbReference>
<dbReference type="SMR" id="B7MG31"/>
<dbReference type="ESTHER" id="ecoli-YFBB">
    <property type="family name" value="MenH_SHCHC"/>
</dbReference>
<dbReference type="MEROPS" id="S33.996"/>
<dbReference type="KEGG" id="ecz:ECS88_2414"/>
<dbReference type="HOGENOM" id="CLU_020336_38_2_6"/>
<dbReference type="UniPathway" id="UPA00079"/>
<dbReference type="UniPathway" id="UPA01057">
    <property type="reaction ID" value="UER00900"/>
</dbReference>
<dbReference type="Proteomes" id="UP000000747">
    <property type="component" value="Chromosome"/>
</dbReference>
<dbReference type="GO" id="GO:0070205">
    <property type="term" value="F:2-succinyl-6-hydroxy-2,4-cyclohexadiene-1-carboxylate synthase activity"/>
    <property type="evidence" value="ECO:0007669"/>
    <property type="project" value="UniProtKB-UniRule"/>
</dbReference>
<dbReference type="GO" id="GO:0009234">
    <property type="term" value="P:menaquinone biosynthetic process"/>
    <property type="evidence" value="ECO:0007669"/>
    <property type="project" value="UniProtKB-UniRule"/>
</dbReference>
<dbReference type="FunFam" id="3.40.50.1820:FF:000038">
    <property type="entry name" value="2-succinyl-6-hydroxy-2,4-cyclohexadiene-1-carboxylate synthase"/>
    <property type="match status" value="1"/>
</dbReference>
<dbReference type="Gene3D" id="3.40.50.1820">
    <property type="entry name" value="alpha/beta hydrolase"/>
    <property type="match status" value="1"/>
</dbReference>
<dbReference type="HAMAP" id="MF_01660">
    <property type="entry name" value="MenH"/>
    <property type="match status" value="1"/>
</dbReference>
<dbReference type="InterPro" id="IPR000073">
    <property type="entry name" value="AB_hydrolase_1"/>
</dbReference>
<dbReference type="InterPro" id="IPR029058">
    <property type="entry name" value="AB_hydrolase_fold"/>
</dbReference>
<dbReference type="InterPro" id="IPR022485">
    <property type="entry name" value="SHCHC_synthase_MenH"/>
</dbReference>
<dbReference type="NCBIfam" id="TIGR03695">
    <property type="entry name" value="menH_SHCHC"/>
    <property type="match status" value="1"/>
</dbReference>
<dbReference type="NCBIfam" id="NF008340">
    <property type="entry name" value="PRK11126.1"/>
    <property type="match status" value="1"/>
</dbReference>
<dbReference type="PANTHER" id="PTHR42916">
    <property type="entry name" value="2-SUCCINYL-5-ENOLPYRUVYL-6-HYDROXY-3-CYCLOHEXENE-1-CARBOXYLATE SYNTHASE"/>
    <property type="match status" value="1"/>
</dbReference>
<dbReference type="PANTHER" id="PTHR42916:SF1">
    <property type="entry name" value="PROTEIN PHYLLO, CHLOROPLASTIC"/>
    <property type="match status" value="1"/>
</dbReference>
<dbReference type="Pfam" id="PF12697">
    <property type="entry name" value="Abhydrolase_6"/>
    <property type="match status" value="1"/>
</dbReference>
<dbReference type="SUPFAM" id="SSF53474">
    <property type="entry name" value="alpha/beta-Hydrolases"/>
    <property type="match status" value="1"/>
</dbReference>
<proteinExistence type="inferred from homology"/>
<reference key="1">
    <citation type="journal article" date="2009" name="PLoS Genet.">
        <title>Organised genome dynamics in the Escherichia coli species results in highly diverse adaptive paths.</title>
        <authorList>
            <person name="Touchon M."/>
            <person name="Hoede C."/>
            <person name="Tenaillon O."/>
            <person name="Barbe V."/>
            <person name="Baeriswyl S."/>
            <person name="Bidet P."/>
            <person name="Bingen E."/>
            <person name="Bonacorsi S."/>
            <person name="Bouchier C."/>
            <person name="Bouvet O."/>
            <person name="Calteau A."/>
            <person name="Chiapello H."/>
            <person name="Clermont O."/>
            <person name="Cruveiller S."/>
            <person name="Danchin A."/>
            <person name="Diard M."/>
            <person name="Dossat C."/>
            <person name="Karoui M.E."/>
            <person name="Frapy E."/>
            <person name="Garry L."/>
            <person name="Ghigo J.M."/>
            <person name="Gilles A.M."/>
            <person name="Johnson J."/>
            <person name="Le Bouguenec C."/>
            <person name="Lescat M."/>
            <person name="Mangenot S."/>
            <person name="Martinez-Jehanne V."/>
            <person name="Matic I."/>
            <person name="Nassif X."/>
            <person name="Oztas S."/>
            <person name="Petit M.A."/>
            <person name="Pichon C."/>
            <person name="Rouy Z."/>
            <person name="Ruf C.S."/>
            <person name="Schneider D."/>
            <person name="Tourret J."/>
            <person name="Vacherie B."/>
            <person name="Vallenet D."/>
            <person name="Medigue C."/>
            <person name="Rocha E.P.C."/>
            <person name="Denamur E."/>
        </authorList>
    </citation>
    <scope>NUCLEOTIDE SEQUENCE [LARGE SCALE GENOMIC DNA]</scope>
    <source>
        <strain>S88 / ExPEC</strain>
    </source>
</reference>
<name>MENH_ECO45</name>
<evidence type="ECO:0000255" key="1">
    <source>
        <dbReference type="HAMAP-Rule" id="MF_01660"/>
    </source>
</evidence>
<keyword id="KW-0456">Lyase</keyword>
<keyword id="KW-0474">Menaquinone biosynthesis</keyword>
<keyword id="KW-1185">Reference proteome</keyword>
<feature type="chain" id="PRO_1000187104" description="2-succinyl-6-hydroxy-2,4-cyclohexadiene-1-carboxylate synthase">
    <location>
        <begin position="1"/>
        <end position="252"/>
    </location>
</feature>
<comment type="function">
    <text evidence="1">Catalyzes a proton abstraction reaction that results in 2,5-elimination of pyruvate from 2-succinyl-5-enolpyruvyl-6-hydroxy-3-cyclohexene-1-carboxylate (SEPHCHC) and the formation of 2-succinyl-6-hydroxy-2,4-cyclohexadiene-1-carboxylate (SHCHC).</text>
</comment>
<comment type="catalytic activity">
    <reaction evidence="1">
        <text>5-enolpyruvoyl-6-hydroxy-2-succinyl-cyclohex-3-ene-1-carboxylate = (1R,6R)-6-hydroxy-2-succinyl-cyclohexa-2,4-diene-1-carboxylate + pyruvate</text>
        <dbReference type="Rhea" id="RHEA:25597"/>
        <dbReference type="ChEBI" id="CHEBI:15361"/>
        <dbReference type="ChEBI" id="CHEBI:58689"/>
        <dbReference type="ChEBI" id="CHEBI:58818"/>
        <dbReference type="EC" id="4.2.99.20"/>
    </reaction>
</comment>
<comment type="pathway">
    <text evidence="1">Quinol/quinone metabolism; 1,4-dihydroxy-2-naphthoate biosynthesis; 1,4-dihydroxy-2-naphthoate from chorismate: step 3/7.</text>
</comment>
<comment type="pathway">
    <text evidence="1">Quinol/quinone metabolism; menaquinone biosynthesis.</text>
</comment>
<comment type="subunit">
    <text evidence="1">Monomer.</text>
</comment>
<comment type="similarity">
    <text evidence="1">Belongs to the AB hydrolase superfamily. MenH family.</text>
</comment>
<gene>
    <name evidence="1" type="primary">menH</name>
    <name type="ordered locus">ECS88_2414</name>
</gene>
<accession>B7MG31</accession>
<organism>
    <name type="scientific">Escherichia coli O45:K1 (strain S88 / ExPEC)</name>
    <dbReference type="NCBI Taxonomy" id="585035"/>
    <lineage>
        <taxon>Bacteria</taxon>
        <taxon>Pseudomonadati</taxon>
        <taxon>Pseudomonadota</taxon>
        <taxon>Gammaproteobacteria</taxon>
        <taxon>Enterobacterales</taxon>
        <taxon>Enterobacteriaceae</taxon>
        <taxon>Escherichia</taxon>
    </lineage>
</organism>